<organism evidence="11">
    <name type="scientific">Aedes aegypti</name>
    <name type="common">Yellowfever mosquito</name>
    <name type="synonym">Culex aegypti</name>
    <dbReference type="NCBI Taxonomy" id="7159"/>
    <lineage>
        <taxon>Eukaryota</taxon>
        <taxon>Metazoa</taxon>
        <taxon>Ecdysozoa</taxon>
        <taxon>Arthropoda</taxon>
        <taxon>Hexapoda</taxon>
        <taxon>Insecta</taxon>
        <taxon>Pterygota</taxon>
        <taxon>Neoptera</taxon>
        <taxon>Endopterygota</taxon>
        <taxon>Diptera</taxon>
        <taxon>Nematocera</taxon>
        <taxon>Culicoidea</taxon>
        <taxon>Culicidae</taxon>
        <taxon>Culicinae</taxon>
        <taxon>Aedini</taxon>
        <taxon>Aedes</taxon>
        <taxon>Stegomyia</taxon>
    </lineage>
</organism>
<evidence type="ECO:0000255" key="1"/>
<evidence type="ECO:0000255" key="2">
    <source>
        <dbReference type="PROSITE-ProRule" id="PRU00160"/>
    </source>
</evidence>
<evidence type="ECO:0000255" key="3">
    <source>
        <dbReference type="PROSITE-ProRule" id="PRU00316"/>
    </source>
</evidence>
<evidence type="ECO:0000255" key="4">
    <source>
        <dbReference type="PROSITE-ProRule" id="PRU00498"/>
    </source>
</evidence>
<evidence type="ECO:0000256" key="5">
    <source>
        <dbReference type="SAM" id="MobiDB-lite"/>
    </source>
</evidence>
<evidence type="ECO:0000269" key="6">
    <source>
    </source>
</evidence>
<evidence type="ECO:0000269" key="7">
    <source>
    </source>
</evidence>
<evidence type="ECO:0000303" key="8">
    <source>
    </source>
</evidence>
<evidence type="ECO:0000303" key="9">
    <source>
    </source>
</evidence>
<evidence type="ECO:0000305" key="10"/>
<evidence type="ECO:0000312" key="11">
    <source>
        <dbReference type="Proteomes" id="UP000008820"/>
    </source>
</evidence>
<dbReference type="EC" id="3.1.3.48" evidence="2"/>
<dbReference type="RefSeq" id="XP_021710377.1">
    <property type="nucleotide sequence ID" value="XM_021854685.1"/>
</dbReference>
<dbReference type="RefSeq" id="XP_021710385.1">
    <property type="nucleotide sequence ID" value="XM_021854693.1"/>
</dbReference>
<dbReference type="SMR" id="A0A6I8TCE0"/>
<dbReference type="EnsemblMetazoa" id="AAEL006071-RB">
    <property type="protein sequence ID" value="AAEL006071-PB"/>
    <property type="gene ID" value="AAEL006071"/>
</dbReference>
<dbReference type="EnsemblMetazoa" id="AAEL006071-RC">
    <property type="protein sequence ID" value="AAEL006071-PC"/>
    <property type="gene ID" value="AAEL006071"/>
</dbReference>
<dbReference type="GeneID" id="5577246"/>
<dbReference type="InParanoid" id="A0A6I8TCE0"/>
<dbReference type="OrthoDB" id="6022401at2759"/>
<dbReference type="Proteomes" id="UP000008820">
    <property type="component" value="Chromosome 1"/>
</dbReference>
<dbReference type="GO" id="GO:0005886">
    <property type="term" value="C:plasma membrane"/>
    <property type="evidence" value="ECO:0007669"/>
    <property type="project" value="UniProtKB-SubCell"/>
</dbReference>
<dbReference type="GO" id="GO:0004725">
    <property type="term" value="F:protein tyrosine phosphatase activity"/>
    <property type="evidence" value="ECO:0007669"/>
    <property type="project" value="UniProtKB-EC"/>
</dbReference>
<dbReference type="GO" id="GO:0009653">
    <property type="term" value="P:anatomical structure morphogenesis"/>
    <property type="evidence" value="ECO:0007669"/>
    <property type="project" value="UniProtKB-ARBA"/>
</dbReference>
<dbReference type="GO" id="GO:0048666">
    <property type="term" value="P:neuron development"/>
    <property type="evidence" value="ECO:0007669"/>
    <property type="project" value="UniProtKB-ARBA"/>
</dbReference>
<dbReference type="CDD" id="cd00063">
    <property type="entry name" value="FN3"/>
    <property type="match status" value="4"/>
</dbReference>
<dbReference type="CDD" id="cd14549">
    <property type="entry name" value="R5-PTPc-1"/>
    <property type="match status" value="1"/>
</dbReference>
<dbReference type="FunFam" id="2.60.40.10:FF:001386">
    <property type="entry name" value="Receptor-type tyrosine-protein phosphatase gamma"/>
    <property type="match status" value="1"/>
</dbReference>
<dbReference type="FunFam" id="2.60.40.10:FF:002711">
    <property type="entry name" value="Receptor-type tyrosine-protein phosphatase gamma"/>
    <property type="match status" value="1"/>
</dbReference>
<dbReference type="FunFam" id="3.90.190.10:FF:000068">
    <property type="entry name" value="receptor-type tyrosine-protein phosphatase zeta"/>
    <property type="match status" value="1"/>
</dbReference>
<dbReference type="FunFam" id="2.60.40.10:FF:001528">
    <property type="entry name" value="Tyrosine-protein phosphatase 99A"/>
    <property type="match status" value="1"/>
</dbReference>
<dbReference type="FunFam" id="3.90.190.10:FF:000097">
    <property type="entry name" value="Tyrosine-protein phosphatase 99A"/>
    <property type="match status" value="1"/>
</dbReference>
<dbReference type="FunFam" id="2.60.40.10:FF:000999">
    <property type="entry name" value="Uncharacterized protein, isoform D"/>
    <property type="match status" value="1"/>
</dbReference>
<dbReference type="Gene3D" id="2.60.40.10">
    <property type="entry name" value="Immunoglobulins"/>
    <property type="match status" value="5"/>
</dbReference>
<dbReference type="Gene3D" id="3.90.190.10">
    <property type="entry name" value="Protein tyrosine phosphatase superfamily"/>
    <property type="match status" value="2"/>
</dbReference>
<dbReference type="InterPro" id="IPR003961">
    <property type="entry name" value="FN3_dom"/>
</dbReference>
<dbReference type="InterPro" id="IPR036116">
    <property type="entry name" value="FN3_sf"/>
</dbReference>
<dbReference type="InterPro" id="IPR036179">
    <property type="entry name" value="Ig-like_dom_sf"/>
</dbReference>
<dbReference type="InterPro" id="IPR013783">
    <property type="entry name" value="Ig-like_fold"/>
</dbReference>
<dbReference type="InterPro" id="IPR003599">
    <property type="entry name" value="Ig_sub"/>
</dbReference>
<dbReference type="InterPro" id="IPR029021">
    <property type="entry name" value="Prot-tyrosine_phosphatase-like"/>
</dbReference>
<dbReference type="InterPro" id="IPR000242">
    <property type="entry name" value="PTP_cat"/>
</dbReference>
<dbReference type="InterPro" id="IPR050713">
    <property type="entry name" value="RTP_Phos/Ushers"/>
</dbReference>
<dbReference type="InterPro" id="IPR006311">
    <property type="entry name" value="TAT_signal"/>
</dbReference>
<dbReference type="InterPro" id="IPR016130">
    <property type="entry name" value="Tyr_Pase_AS"/>
</dbReference>
<dbReference type="InterPro" id="IPR003595">
    <property type="entry name" value="Tyr_Pase_cat"/>
</dbReference>
<dbReference type="InterPro" id="IPR000387">
    <property type="entry name" value="Tyr_Pase_dom"/>
</dbReference>
<dbReference type="PANTHER" id="PTHR46957">
    <property type="entry name" value="CYTOKINE RECEPTOR"/>
    <property type="match status" value="1"/>
</dbReference>
<dbReference type="PANTHER" id="PTHR46957:SF3">
    <property type="entry name" value="CYTOKINE RECEPTOR"/>
    <property type="match status" value="1"/>
</dbReference>
<dbReference type="Pfam" id="PF00041">
    <property type="entry name" value="fn3"/>
    <property type="match status" value="4"/>
</dbReference>
<dbReference type="Pfam" id="PF00102">
    <property type="entry name" value="Y_phosphatase"/>
    <property type="match status" value="2"/>
</dbReference>
<dbReference type="PRINTS" id="PR00700">
    <property type="entry name" value="PRTYPHPHTASE"/>
</dbReference>
<dbReference type="SMART" id="SM00060">
    <property type="entry name" value="FN3"/>
    <property type="match status" value="4"/>
</dbReference>
<dbReference type="SMART" id="SM00409">
    <property type="entry name" value="IG"/>
    <property type="match status" value="1"/>
</dbReference>
<dbReference type="SMART" id="SM00194">
    <property type="entry name" value="PTPc"/>
    <property type="match status" value="2"/>
</dbReference>
<dbReference type="SMART" id="SM00404">
    <property type="entry name" value="PTPc_motif"/>
    <property type="match status" value="2"/>
</dbReference>
<dbReference type="SUPFAM" id="SSF52799">
    <property type="entry name" value="(Phosphotyrosine protein) phosphatases II"/>
    <property type="match status" value="2"/>
</dbReference>
<dbReference type="SUPFAM" id="SSF49265">
    <property type="entry name" value="Fibronectin type III"/>
    <property type="match status" value="2"/>
</dbReference>
<dbReference type="SUPFAM" id="SSF48726">
    <property type="entry name" value="Immunoglobulin"/>
    <property type="match status" value="1"/>
</dbReference>
<dbReference type="PROSITE" id="PS50853">
    <property type="entry name" value="FN3"/>
    <property type="match status" value="4"/>
</dbReference>
<dbReference type="PROSITE" id="PS51318">
    <property type="entry name" value="TAT"/>
    <property type="match status" value="1"/>
</dbReference>
<dbReference type="PROSITE" id="PS00383">
    <property type="entry name" value="TYR_PHOSPHATASE_1"/>
    <property type="match status" value="1"/>
</dbReference>
<dbReference type="PROSITE" id="PS50056">
    <property type="entry name" value="TYR_PHOSPHATASE_2"/>
    <property type="match status" value="1"/>
</dbReference>
<dbReference type="PROSITE" id="PS50055">
    <property type="entry name" value="TYR_PHOSPHATASE_PTP"/>
    <property type="match status" value="2"/>
</dbReference>
<comment type="function">
    <text evidence="10">Putative protein tyrosine-protein phosphatase.</text>
</comment>
<comment type="function">
    <text evidence="6">(Microbial infection) Facilitates West Nile virus infection in mosquitoes probably via recruiting West Nile virus particles in complex with C-type lectin mosGCTL-1 to the cell surface.</text>
</comment>
<comment type="function">
    <text evidence="7">(Microbial infection) Facilitates Japanese encephalitis virus infection in mosquitoes probably via recruiting Japanese encephalitis virus particles in complex with C-type lectin mosGCTL-7 to the cell surface.</text>
</comment>
<comment type="catalytic activity">
    <reaction evidence="2">
        <text>O-phospho-L-tyrosyl-[protein] + H2O = L-tyrosyl-[protein] + phosphate</text>
        <dbReference type="Rhea" id="RHEA:10684"/>
        <dbReference type="Rhea" id="RHEA-COMP:10136"/>
        <dbReference type="Rhea" id="RHEA-COMP:20101"/>
        <dbReference type="ChEBI" id="CHEBI:15377"/>
        <dbReference type="ChEBI" id="CHEBI:43474"/>
        <dbReference type="ChEBI" id="CHEBI:46858"/>
        <dbReference type="ChEBI" id="CHEBI:61978"/>
        <dbReference type="EC" id="3.1.3.48"/>
    </reaction>
</comment>
<comment type="subunit">
    <text evidence="6 7">Interacts with C-type lectin mosGCTL-1; the interaction probably mediates the recruitment of West Nile virus particles in complex with C-type lectin mosGCTL-1 to the cell surface (PubMed:20797779). Interacts with C-type lectin mosGCTL-7; the interaction probably mediates the recruitment of Japanese encephalitis virus particles in complex with C-type lectin mosGCTL-7 to the cell surface (PubMed:28250133).</text>
</comment>
<comment type="subcellular location">
    <subcellularLocation>
        <location evidence="6">Cell membrane</location>
        <topology evidence="1">Single-pass type I membrane protein</topology>
    </subcellularLocation>
</comment>
<comment type="tissue specificity">
    <text evidence="6">Salivary gland (at protein level) (PubMed:20797779). Hemolymph (PubMed:20797779). Low-level expression in midgut (PubMed:20797779).</text>
</comment>
<comment type="induction">
    <text evidence="6">(Microbial infection) West Nile virus infection does not affect expression levels.</text>
</comment>
<comment type="disruption phenotype">
    <text evidence="6">(Microbial infection) RNAi-mediated knockdown results in reduced West Nile virus infection levels (PubMed:20797779). Reduced ability of C-type lectin mosGCTL-1 to facilitate West Nile virus infection, indicating possible role of the protein as a receptor for C-type lectin mosGCTL-1 (PubMed:20797779).</text>
</comment>
<comment type="disruption phenotype">
    <text evidence="7">(Microbial infection) RNAi-mediated knockdown results in reduced Japanese encephalitis virus infection levels (PubMed:28250133). Reduced ability of C-type lectin mosGCTL-7 to facilitate Japanese encephalitis virus infection, indicating possible role of the protein as a receptor for C-type lectin mosGCTL-7 (PubMed:28250133).</text>
</comment>
<comment type="similarity">
    <text evidence="10">Belongs to the protein-tyrosine phosphatase family. Receptor class subfamily.</text>
</comment>
<name>PTP1_AEDAE</name>
<reference evidence="11" key="1">
    <citation type="journal article" date="2018" name="Nature">
        <title>Improved reference genome of Aedes aegypti informs arbovirus vector control.</title>
        <authorList>
            <person name="Matthews B.J."/>
            <person name="Dudchenko O."/>
            <person name="Kingan S.B."/>
            <person name="Koren S."/>
            <person name="Antoshechkin I."/>
            <person name="Crawford J.E."/>
            <person name="Glassford W.J."/>
            <person name="Herre M."/>
            <person name="Redmond S.N."/>
            <person name="Rose N.H."/>
            <person name="Weedall G.D."/>
            <person name="Wu Y."/>
            <person name="Batra S.S."/>
            <person name="Brito-Sierra C.A."/>
            <person name="Buckingham S.D."/>
            <person name="Campbell C.L."/>
            <person name="Chan S."/>
            <person name="Cox E."/>
            <person name="Evans B.R."/>
            <person name="Fansiri T."/>
            <person name="Filipovic I."/>
            <person name="Fontaine A."/>
            <person name="Gloria-Soria A."/>
            <person name="Hall R."/>
            <person name="Joardar V.S."/>
            <person name="Jones A.K."/>
            <person name="Kay R.G.G."/>
            <person name="Kodali V.K."/>
            <person name="Lee J."/>
            <person name="Lycett G.J."/>
            <person name="Mitchell S.N."/>
            <person name="Muehling J."/>
            <person name="Murphy M.R."/>
            <person name="Omer A.D."/>
            <person name="Partridge F.A."/>
            <person name="Peluso P."/>
            <person name="Aiden A.P."/>
            <person name="Ramasamy V."/>
            <person name="Rasic G."/>
            <person name="Roy S."/>
            <person name="Saavedra-Rodriguez K."/>
            <person name="Sharan S."/>
            <person name="Sharma A."/>
            <person name="Smith M.L."/>
            <person name="Turner J."/>
            <person name="Weakley A.M."/>
            <person name="Zhao Z."/>
            <person name="Akbari O.S."/>
            <person name="Black W.C. IV"/>
            <person name="Cao H."/>
            <person name="Darby A.C."/>
            <person name="Hill C.A."/>
            <person name="Johnston J.S."/>
            <person name="Murphy T.D."/>
            <person name="Raikhel A.S."/>
            <person name="Sattelle D.B."/>
            <person name="Sharakhov I.V."/>
            <person name="White B.J."/>
            <person name="Zhao L."/>
            <person name="Aiden E.L."/>
            <person name="Mann R.S."/>
            <person name="Lambrechts L."/>
            <person name="Powell J.R."/>
            <person name="Sharakhova M.V."/>
            <person name="Tu Z."/>
            <person name="Robertson H.M."/>
            <person name="McBride C.S."/>
            <person name="Hastie A.R."/>
            <person name="Korlach J."/>
            <person name="Neafsey D.E."/>
            <person name="Phillippy A.M."/>
            <person name="Vosshall L.B."/>
        </authorList>
    </citation>
    <scope>NUCLEOTIDE SEQUENCE [LARGE SCALE GENOMIC DNA]</scope>
    <source>
        <strain evidence="11">LVP_AGWG</strain>
    </source>
</reference>
<reference evidence="10" key="2">
    <citation type="journal article" date="2010" name="Cell">
        <title>A C-type lectin collaborates with a CD45 phosphatase homolog to facilitate West Nile virus infection of mosquitoes.</title>
        <authorList>
            <person name="Cheng G."/>
            <person name="Cox J."/>
            <person name="Wang P."/>
            <person name="Krishnan M.N."/>
            <person name="Dai J."/>
            <person name="Qian F."/>
            <person name="Anderson J.F."/>
            <person name="Fikrig E."/>
        </authorList>
    </citation>
    <scope>FUNCTION (MICROBIAL INFECTION)</scope>
    <scope>INTERACTION WITH C-TYPE LECTIN MOSGCTL-1</scope>
    <scope>SUBCELLULAR LOCATION</scope>
    <scope>TISSUE SPECIFICITY</scope>
    <scope>INDUCTION (MICROBIAL INFECTION)</scope>
    <scope>DISRUPTION PHENOTYPE (MICROBIAL INFECTION)</scope>
</reference>
<reference evidence="10" key="3">
    <citation type="journal article" date="2017" name="J. Virol.">
        <title>mosGCTL-7, a C-Type Lectin Protein, Mediates Japanese Encephalitis Virus Infection in Mosquitoes.</title>
        <authorList>
            <person name="Liu K."/>
            <person name="Qian Y."/>
            <person name="Jung Y.S."/>
            <person name="Zhou B."/>
            <person name="Cao R."/>
            <person name="Shen T."/>
            <person name="Shao D."/>
            <person name="Wei J."/>
            <person name="Ma Z."/>
            <person name="Chen P."/>
            <person name="Zhu H."/>
            <person name="Qiu Y."/>
        </authorList>
    </citation>
    <scope>FUNCTION (MICROBIAL INFECTION)</scope>
    <scope>INTERACTION WITH C-TYPE LECTIN MOSGCTL-7</scope>
    <scope>DISRUPTION PHENOTYPE (MICROBIAL INFECTION)</scope>
</reference>
<proteinExistence type="evidence at protein level"/>
<feature type="signal peptide" evidence="1">
    <location>
        <begin position="1"/>
        <end position="36"/>
    </location>
</feature>
<feature type="chain" id="PRO_0000461389" description="Putative receptor-type tyrosine-protein phosphatase mosPTP-1" evidence="1">
    <location>
        <begin position="37"/>
        <end position="1309"/>
    </location>
</feature>
<feature type="topological domain" description="Extracellular" evidence="10">
    <location>
        <begin position="37"/>
        <end position="572"/>
    </location>
</feature>
<feature type="transmembrane region" description="Helical" evidence="1">
    <location>
        <begin position="573"/>
        <end position="593"/>
    </location>
</feature>
<feature type="topological domain" description="Cytoplasmic" evidence="10">
    <location>
        <begin position="594"/>
        <end position="1309"/>
    </location>
</feature>
<feature type="domain" description="Fibronectin type-III 1" evidence="3">
    <location>
        <begin position="147"/>
        <end position="244"/>
    </location>
</feature>
<feature type="domain" description="Fibronectin type-III 2" evidence="3">
    <location>
        <begin position="249"/>
        <end position="347"/>
    </location>
</feature>
<feature type="domain" description="Fibronectin type-III 3" evidence="3">
    <location>
        <begin position="350"/>
        <end position="449"/>
    </location>
</feature>
<feature type="domain" description="Fibronectin type-III 4" evidence="3">
    <location>
        <begin position="450"/>
        <end position="553"/>
    </location>
</feature>
<feature type="domain" description="Tyrosine-protein phosphatase 1" evidence="2">
    <location>
        <begin position="656"/>
        <end position="921"/>
    </location>
</feature>
<feature type="domain" description="Tyrosine-protein phosphatase 2" evidence="2">
    <location>
        <begin position="944"/>
        <end position="1196"/>
    </location>
</feature>
<feature type="region of interest" description="Disordered" evidence="5">
    <location>
        <begin position="1239"/>
        <end position="1269"/>
    </location>
</feature>
<feature type="compositionally biased region" description="Gly residues" evidence="5">
    <location>
        <begin position="1256"/>
        <end position="1268"/>
    </location>
</feature>
<feature type="active site" description="Phosphocysteine intermediate" evidence="2">
    <location>
        <position position="862"/>
    </location>
</feature>
<feature type="glycosylation site" description="N-linked (GlcNAc...) asparagine" evidence="4">
    <location>
        <position position="60"/>
    </location>
</feature>
<feature type="glycosylation site" description="N-linked (GlcNAc...) asparagine" evidence="4">
    <location>
        <position position="107"/>
    </location>
</feature>
<feature type="glycosylation site" description="N-linked (GlcNAc...) asparagine" evidence="4">
    <location>
        <position position="162"/>
    </location>
</feature>
<feature type="glycosylation site" description="N-linked (GlcNAc...) asparagine" evidence="4">
    <location>
        <position position="257"/>
    </location>
</feature>
<feature type="glycosylation site" description="N-linked (GlcNAc...) asparagine" evidence="4">
    <location>
        <position position="353"/>
    </location>
</feature>
<feature type="glycosylation site" description="N-linked (GlcNAc...) asparagine" evidence="4">
    <location>
        <position position="389"/>
    </location>
</feature>
<feature type="glycosylation site" description="N-linked (GlcNAc...) asparagine" evidence="4">
    <location>
        <position position="455"/>
    </location>
</feature>
<feature type="glycosylation site" description="N-linked (GlcNAc...) asparagine" evidence="4">
    <location>
        <position position="501"/>
    </location>
</feature>
<feature type="glycosylation site" description="N-linked (GlcNAc...) asparagine" evidence="4">
    <location>
        <position position="513"/>
    </location>
</feature>
<sequence>MNSAPRNAGAARSVDRRGFIAACGLLVLLVVRMLGAADATRIFDIENIPVVKYVAVAGRNVTLNCPGVTEHSLVDTLVWRTSQTIAEYVDGGLPLVSSLRITLLPDNFSLHFNPAFASDTDEYSCLVNDRHSPDALVDLLVQDVPDPPGRPLVLSFTSRTVNLSWAYTQDPRNAPINNFVIETRVGENGEWDQVDPLYTNSNEAFYQVTGLVPFTVYSFRVIAVNELGHSPPSKESYYFVTLREAPTGKPVTTIAHNTSATSVYISWKPPPAETILGEFLGYRITYRARDKGTDDDVKEIYIRDSTVESHEIHHLETYTQYLASIQVFNPEGLGPPTTVLVMTDEGVPSKPLNLSVLEVTSTTIKITWREPEKLNGAIHGYRVYYVHQNQTLLHLPILKADAAVNSVYTYTLSNLKPYTDYKIIVAAFTKKFDGEPSEVSQRTDISGPSAPKVVNLTCHSQHELLFGWHIPQTYYNTIDYYIISYRNLEHSEYKDIRLTANSSIVETSMIIPNLTTNMVYEVKVRAASASVINPKQIILGSYSEPKKISLQLHCEKIPQPSQRQVYDDYNLAVLGGIVFSCFGLLLIVLSFLLWKKCFHAAYYYLDDPPACQGANTAGLIDWEAPCEVAGEVRGPIPVTEFAKHVASLHVDGDIGFSKEYEAIQGEALNDEYPSEHSQHPDNKGKNRYLNVIAYDHSRVHLRQVPGQKKHLDYINANYIDGYQRPRSFIGTQGPLPGTFDCFWRMIWEQRVAIIVMITNLVERGRRKCDMYWPKDGAEMYGVIQVRLIREDVMATYTVRTLQIKHTKLKKKKASQSEKLVYQYHYTNWPDHGTPDHPLPVINFVKKSTAANPSDAGPIVVHCSAGVGRTGTYIVLDAMLKQIESKGMLNVFGFLRYIRAQRNYLVQTEEQYIFIHDALVEAIDSGETNIKMDAIGGLVNNIDFIDNQYKLITSYQPKEINLTSALKSVNAIKNRSSLVPLEGSRVHLTPKPGVEGSDYINASWLHGFRRLRDFVVTQHPLIETFKDFWQMVWDHNAQTVVLLSSADNMSFLQFWPNESEPMESDYYRIRMVSETSENNYIVRNFVIQSIQDDYELSVRMFENPMWPDMANPRSIYDFAVRVHERCAQYRNGPIVVVDRYGGFQACQFCCISSLAMQLEYDQTANVYTYAKLYHNKRPGIWSSYEDIRQIYRILSYMPKDLGLLKCTELRTEFDDAAIMTATPDLYSKICSNGSINTHLNSGDGGGNGNDGVPTGNGTNGGLPMSGGGTTTAATIQNGGTVIVKMNGEDNDELSVVVATSNHLNLDHNQS</sequence>
<keyword id="KW-1003">Cell membrane</keyword>
<keyword id="KW-0325">Glycoprotein</keyword>
<keyword id="KW-0378">Hydrolase</keyword>
<keyword id="KW-0472">Membrane</keyword>
<keyword id="KW-0904">Protein phosphatase</keyword>
<keyword id="KW-1185">Reference proteome</keyword>
<keyword id="KW-0732">Signal</keyword>
<keyword id="KW-0812">Transmembrane</keyword>
<keyword id="KW-1133">Transmembrane helix</keyword>
<accession>A0A6I8TCE0</accession>
<protein>
    <recommendedName>
        <fullName evidence="10">Putative receptor-type tyrosine-protein phosphatase mosPTP-1</fullName>
        <shortName evidence="8 9">mosPTP-1</shortName>
        <ecNumber evidence="2">3.1.3.48</ecNumber>
    </recommendedName>
</protein>